<organism>
    <name type="scientific">Anaeromyxobacter sp. (strain K)</name>
    <dbReference type="NCBI Taxonomy" id="447217"/>
    <lineage>
        <taxon>Bacteria</taxon>
        <taxon>Pseudomonadati</taxon>
        <taxon>Myxococcota</taxon>
        <taxon>Myxococcia</taxon>
        <taxon>Myxococcales</taxon>
        <taxon>Cystobacterineae</taxon>
        <taxon>Anaeromyxobacteraceae</taxon>
        <taxon>Anaeromyxobacter</taxon>
    </lineage>
</organism>
<name>LEXA_ANASK</name>
<comment type="function">
    <text evidence="1">Represses a number of genes involved in the response to DNA damage (SOS response), including recA and lexA. In the presence of single-stranded DNA, RecA interacts with LexA causing an autocatalytic cleavage which disrupts the DNA-binding part of LexA, leading to derepression of the SOS regulon and eventually DNA repair.</text>
</comment>
<comment type="catalytic activity">
    <reaction evidence="1">
        <text>Hydrolysis of Ala-|-Gly bond in repressor LexA.</text>
        <dbReference type="EC" id="3.4.21.88"/>
    </reaction>
</comment>
<comment type="subunit">
    <text evidence="1">Homodimer.</text>
</comment>
<comment type="similarity">
    <text evidence="1">Belongs to the peptidase S24 family.</text>
</comment>
<proteinExistence type="inferred from homology"/>
<gene>
    <name evidence="1" type="primary">lexA</name>
    <name type="ordered locus">AnaeK_2148</name>
</gene>
<accession>B4UCX8</accession>
<protein>
    <recommendedName>
        <fullName evidence="1">LexA repressor</fullName>
        <ecNumber evidence="1">3.4.21.88</ecNumber>
    </recommendedName>
</protein>
<reference key="1">
    <citation type="submission" date="2008-08" db="EMBL/GenBank/DDBJ databases">
        <title>Complete sequence of Anaeromyxobacter sp. K.</title>
        <authorList>
            <consortium name="US DOE Joint Genome Institute"/>
            <person name="Lucas S."/>
            <person name="Copeland A."/>
            <person name="Lapidus A."/>
            <person name="Glavina del Rio T."/>
            <person name="Dalin E."/>
            <person name="Tice H."/>
            <person name="Bruce D."/>
            <person name="Goodwin L."/>
            <person name="Pitluck S."/>
            <person name="Saunders E."/>
            <person name="Brettin T."/>
            <person name="Detter J.C."/>
            <person name="Han C."/>
            <person name="Larimer F."/>
            <person name="Land M."/>
            <person name="Hauser L."/>
            <person name="Kyrpides N."/>
            <person name="Ovchinnikiva G."/>
            <person name="Beliaev A."/>
        </authorList>
    </citation>
    <scope>NUCLEOTIDE SEQUENCE [LARGE SCALE GENOMIC DNA]</scope>
    <source>
        <strain>K</strain>
    </source>
</reference>
<evidence type="ECO:0000255" key="1">
    <source>
        <dbReference type="HAMAP-Rule" id="MF_00015"/>
    </source>
</evidence>
<keyword id="KW-0068">Autocatalytic cleavage</keyword>
<keyword id="KW-0227">DNA damage</keyword>
<keyword id="KW-0234">DNA repair</keyword>
<keyword id="KW-0235">DNA replication</keyword>
<keyword id="KW-0238">DNA-binding</keyword>
<keyword id="KW-0378">Hydrolase</keyword>
<keyword id="KW-0678">Repressor</keyword>
<keyword id="KW-0742">SOS response</keyword>
<keyword id="KW-0804">Transcription</keyword>
<keyword id="KW-0805">Transcription regulation</keyword>
<feature type="chain" id="PRO_1000089544" description="LexA repressor">
    <location>
        <begin position="1"/>
        <end position="230"/>
    </location>
</feature>
<feature type="DNA-binding region" description="H-T-H motif" evidence="1">
    <location>
        <begin position="28"/>
        <end position="48"/>
    </location>
</feature>
<feature type="active site" description="For autocatalytic cleavage activity" evidence="1">
    <location>
        <position position="148"/>
    </location>
</feature>
<feature type="active site" description="For autocatalytic cleavage activity" evidence="1">
    <location>
        <position position="185"/>
    </location>
</feature>
<feature type="site" description="Cleavage; by autolysis" evidence="1">
    <location>
        <begin position="112"/>
        <end position="113"/>
    </location>
</feature>
<dbReference type="EC" id="3.4.21.88" evidence="1"/>
<dbReference type="EMBL" id="CP001131">
    <property type="protein sequence ID" value="ACG73375.1"/>
    <property type="molecule type" value="Genomic_DNA"/>
</dbReference>
<dbReference type="RefSeq" id="WP_012526176.1">
    <property type="nucleotide sequence ID" value="NC_011145.1"/>
</dbReference>
<dbReference type="SMR" id="B4UCX8"/>
<dbReference type="MEROPS" id="S24.001"/>
<dbReference type="KEGG" id="ank:AnaeK_2148"/>
<dbReference type="HOGENOM" id="CLU_066192_45_1_7"/>
<dbReference type="OrthoDB" id="9802364at2"/>
<dbReference type="Proteomes" id="UP000001871">
    <property type="component" value="Chromosome"/>
</dbReference>
<dbReference type="GO" id="GO:0003677">
    <property type="term" value="F:DNA binding"/>
    <property type="evidence" value="ECO:0007669"/>
    <property type="project" value="UniProtKB-UniRule"/>
</dbReference>
<dbReference type="GO" id="GO:0004252">
    <property type="term" value="F:serine-type endopeptidase activity"/>
    <property type="evidence" value="ECO:0007669"/>
    <property type="project" value="UniProtKB-UniRule"/>
</dbReference>
<dbReference type="GO" id="GO:0006281">
    <property type="term" value="P:DNA repair"/>
    <property type="evidence" value="ECO:0007669"/>
    <property type="project" value="UniProtKB-UniRule"/>
</dbReference>
<dbReference type="GO" id="GO:0006260">
    <property type="term" value="P:DNA replication"/>
    <property type="evidence" value="ECO:0007669"/>
    <property type="project" value="UniProtKB-UniRule"/>
</dbReference>
<dbReference type="GO" id="GO:0045892">
    <property type="term" value="P:negative regulation of DNA-templated transcription"/>
    <property type="evidence" value="ECO:0007669"/>
    <property type="project" value="UniProtKB-UniRule"/>
</dbReference>
<dbReference type="GO" id="GO:0006508">
    <property type="term" value="P:proteolysis"/>
    <property type="evidence" value="ECO:0007669"/>
    <property type="project" value="InterPro"/>
</dbReference>
<dbReference type="GO" id="GO:0009432">
    <property type="term" value="P:SOS response"/>
    <property type="evidence" value="ECO:0007669"/>
    <property type="project" value="UniProtKB-UniRule"/>
</dbReference>
<dbReference type="CDD" id="cd06529">
    <property type="entry name" value="S24_LexA-like"/>
    <property type="match status" value="1"/>
</dbReference>
<dbReference type="FunFam" id="1.10.10.10:FF:000009">
    <property type="entry name" value="LexA repressor"/>
    <property type="match status" value="1"/>
</dbReference>
<dbReference type="FunFam" id="2.10.109.10:FF:000001">
    <property type="entry name" value="LexA repressor"/>
    <property type="match status" value="1"/>
</dbReference>
<dbReference type="Gene3D" id="2.10.109.10">
    <property type="entry name" value="Umud Fragment, subunit A"/>
    <property type="match status" value="1"/>
</dbReference>
<dbReference type="Gene3D" id="1.10.10.10">
    <property type="entry name" value="Winged helix-like DNA-binding domain superfamily/Winged helix DNA-binding domain"/>
    <property type="match status" value="1"/>
</dbReference>
<dbReference type="HAMAP" id="MF_00015">
    <property type="entry name" value="LexA"/>
    <property type="match status" value="1"/>
</dbReference>
<dbReference type="InterPro" id="IPR006200">
    <property type="entry name" value="LexA"/>
</dbReference>
<dbReference type="InterPro" id="IPR039418">
    <property type="entry name" value="LexA-like"/>
</dbReference>
<dbReference type="InterPro" id="IPR036286">
    <property type="entry name" value="LexA/Signal_pep-like_sf"/>
</dbReference>
<dbReference type="InterPro" id="IPR006199">
    <property type="entry name" value="LexA_DNA-bd_dom"/>
</dbReference>
<dbReference type="InterPro" id="IPR050077">
    <property type="entry name" value="LexA_repressor"/>
</dbReference>
<dbReference type="InterPro" id="IPR006197">
    <property type="entry name" value="Peptidase_S24_LexA"/>
</dbReference>
<dbReference type="InterPro" id="IPR015927">
    <property type="entry name" value="Peptidase_S24_S26A/B/C"/>
</dbReference>
<dbReference type="InterPro" id="IPR036388">
    <property type="entry name" value="WH-like_DNA-bd_sf"/>
</dbReference>
<dbReference type="InterPro" id="IPR036390">
    <property type="entry name" value="WH_DNA-bd_sf"/>
</dbReference>
<dbReference type="NCBIfam" id="TIGR00498">
    <property type="entry name" value="lexA"/>
    <property type="match status" value="1"/>
</dbReference>
<dbReference type="PANTHER" id="PTHR33516">
    <property type="entry name" value="LEXA REPRESSOR"/>
    <property type="match status" value="1"/>
</dbReference>
<dbReference type="PANTHER" id="PTHR33516:SF2">
    <property type="entry name" value="LEXA REPRESSOR-RELATED"/>
    <property type="match status" value="1"/>
</dbReference>
<dbReference type="Pfam" id="PF01726">
    <property type="entry name" value="LexA_DNA_bind"/>
    <property type="match status" value="1"/>
</dbReference>
<dbReference type="Pfam" id="PF00717">
    <property type="entry name" value="Peptidase_S24"/>
    <property type="match status" value="1"/>
</dbReference>
<dbReference type="PRINTS" id="PR00726">
    <property type="entry name" value="LEXASERPTASE"/>
</dbReference>
<dbReference type="SUPFAM" id="SSF51306">
    <property type="entry name" value="LexA/Signal peptidase"/>
    <property type="match status" value="1"/>
</dbReference>
<dbReference type="SUPFAM" id="SSF46785">
    <property type="entry name" value="Winged helix' DNA-binding domain"/>
    <property type="match status" value="1"/>
</dbReference>
<sequence>MEGLTDRQLEVLRFIASQIEDHGYPPTIREIGEALDIRSTNGVNDHLKALERKGYLSRDPVKSRALIPTSAAREALGGGGGDAGSNVVPLVRGPARPGSRMIEIPIVGRVAAGMPILAQERVEDTVQVDAFLLGTNKKVYGLRVQGDSMIGDGILPGDYVFVKKQLNADDGEIVVAMIDDEATVKRVYFEGDRVRFQPSNPRMAPIYVRHSDFRSTMILGVVVGVYRKLT</sequence>